<organism>
    <name type="scientific">Mannheimia haemolytica</name>
    <name type="common">Pasteurella haemolytica</name>
    <dbReference type="NCBI Taxonomy" id="75985"/>
    <lineage>
        <taxon>Bacteria</taxon>
        <taxon>Pseudomonadati</taxon>
        <taxon>Pseudomonadota</taxon>
        <taxon>Gammaproteobacteria</taxon>
        <taxon>Pasteurellales</taxon>
        <taxon>Pasteurellaceae</taxon>
        <taxon>Mannheimia</taxon>
    </lineage>
</organism>
<evidence type="ECO:0000255" key="1">
    <source>
        <dbReference type="HAMAP-Rule" id="MF_01643"/>
    </source>
</evidence>
<sequence>MTTIGTPLRTNATKVMMLGSGELGKEVVIELQPLGVEVIAVDRYDNAPAQQVAHRAYTISMLDGNALRDLVEKEKPDFIVPEVEAIATATLVELEQEGYNVIPTAKATQLTMNREGIRRLAAEELGLKTSPYRFVDNFEQFQQAIQEIGIPCVVKPIMSSSGHGQSVIKSEADIQQAWDYSQQGGRAGGGRVIVEGFIKFDYEITQLTVRHIHGIVFSSHRHIQVDGDYRESWQPQQMSDIALKKAQETAEKITSALGGRGIFGVELFVCGDEIIFNEVSPRPHDTGIVTMASQELSQFALHARAILGLPIPEIYRISPAASKAIVVEGKSDNVRFGGVDKVLAEIGTNIRLFGKGEVNGHRRLGVILARDENTVRALETSRRAYDKLDIQL</sequence>
<protein>
    <recommendedName>
        <fullName evidence="1">Formate-dependent phosphoribosylglycinamide formyltransferase</fullName>
        <ecNumber evidence="1">6.3.1.21</ecNumber>
    </recommendedName>
    <alternativeName>
        <fullName evidence="1">5'-phosphoribosylglycinamide transformylase 2</fullName>
    </alternativeName>
    <alternativeName>
        <fullName evidence="1">Formate-dependent GAR transformylase</fullName>
    </alternativeName>
    <alternativeName>
        <fullName evidence="1">GAR transformylase 2</fullName>
        <shortName evidence="1">GART 2</shortName>
    </alternativeName>
    <alternativeName>
        <fullName evidence="1">Non-folate glycinamide ribonucleotide transformylase</fullName>
    </alternativeName>
    <alternativeName>
        <fullName evidence="1">Phosphoribosylglycinamide formyltransferase 2</fullName>
    </alternativeName>
</protein>
<reference key="1">
    <citation type="journal article" date="1993" name="DNA Seq.">
        <title>Cloning, sequencing and expression of a Pasteurella haemolytica A1 gene encoding a PurK-like protein.</title>
        <authorList>
            <person name="Chang Y.F."/>
            <person name="Ma D.P."/>
            <person name="Young R."/>
            <person name="Struck D.K."/>
        </authorList>
    </citation>
    <scope>NUCLEOTIDE SEQUENCE [GENOMIC DNA]</scope>
    <scope>PROTEIN SEQUENCE OF 1-14</scope>
    <source>
        <strain>Serotype A1</strain>
    </source>
</reference>
<proteinExistence type="evidence at protein level"/>
<feature type="chain" id="PRO_0000074957" description="Formate-dependent phosphoribosylglycinamide formyltransferase">
    <location>
        <begin position="1"/>
        <end position="392"/>
    </location>
</feature>
<feature type="domain" description="ATP-grasp" evidence="1">
    <location>
        <begin position="119"/>
        <end position="307"/>
    </location>
</feature>
<feature type="binding site" evidence="1">
    <location>
        <begin position="22"/>
        <end position="23"/>
    </location>
    <ligand>
        <name>N(1)-(5-phospho-beta-D-ribosyl)glycinamide</name>
        <dbReference type="ChEBI" id="CHEBI:143788"/>
    </ligand>
</feature>
<feature type="binding site" evidence="1">
    <location>
        <position position="82"/>
    </location>
    <ligand>
        <name>N(1)-(5-phospho-beta-D-ribosyl)glycinamide</name>
        <dbReference type="ChEBI" id="CHEBI:143788"/>
    </ligand>
</feature>
<feature type="binding site" evidence="1">
    <location>
        <position position="114"/>
    </location>
    <ligand>
        <name>ATP</name>
        <dbReference type="ChEBI" id="CHEBI:30616"/>
    </ligand>
</feature>
<feature type="binding site" evidence="1">
    <location>
        <position position="155"/>
    </location>
    <ligand>
        <name>ATP</name>
        <dbReference type="ChEBI" id="CHEBI:30616"/>
    </ligand>
</feature>
<feature type="binding site" evidence="1">
    <location>
        <begin position="160"/>
        <end position="165"/>
    </location>
    <ligand>
        <name>ATP</name>
        <dbReference type="ChEBI" id="CHEBI:30616"/>
    </ligand>
</feature>
<feature type="binding site" evidence="1">
    <location>
        <begin position="195"/>
        <end position="198"/>
    </location>
    <ligand>
        <name>ATP</name>
        <dbReference type="ChEBI" id="CHEBI:30616"/>
    </ligand>
</feature>
<feature type="binding site" evidence="1">
    <location>
        <position position="203"/>
    </location>
    <ligand>
        <name>ATP</name>
        <dbReference type="ChEBI" id="CHEBI:30616"/>
    </ligand>
</feature>
<feature type="binding site" evidence="1">
    <location>
        <position position="266"/>
    </location>
    <ligand>
        <name>Mg(2+)</name>
        <dbReference type="ChEBI" id="CHEBI:18420"/>
    </ligand>
</feature>
<feature type="binding site" evidence="1">
    <location>
        <position position="278"/>
    </location>
    <ligand>
        <name>Mg(2+)</name>
        <dbReference type="ChEBI" id="CHEBI:18420"/>
    </ligand>
</feature>
<feature type="binding site" evidence="1">
    <location>
        <position position="285"/>
    </location>
    <ligand>
        <name>N(1)-(5-phospho-beta-D-ribosyl)glycinamide</name>
        <dbReference type="ChEBI" id="CHEBI:143788"/>
    </ligand>
</feature>
<feature type="binding site" evidence="1">
    <location>
        <position position="355"/>
    </location>
    <ligand>
        <name>N(1)-(5-phospho-beta-D-ribosyl)glycinamide</name>
        <dbReference type="ChEBI" id="CHEBI:143788"/>
    </ligand>
</feature>
<feature type="binding site" evidence="1">
    <location>
        <begin position="362"/>
        <end position="363"/>
    </location>
    <ligand>
        <name>N(1)-(5-phospho-beta-D-ribosyl)glycinamide</name>
        <dbReference type="ChEBI" id="CHEBI:143788"/>
    </ligand>
</feature>
<name>PURT_MANHA</name>
<gene>
    <name evidence="1" type="primary">purT</name>
    <name type="synonym">mpa1</name>
</gene>
<comment type="function">
    <text evidence="1">Involved in the de novo purine biosynthesis. Catalyzes the transfer of formate to 5-phospho-ribosyl-glycinamide (GAR), producing 5-phospho-ribosyl-N-formylglycinamide (FGAR). Formate is provided by PurU via hydrolysis of 10-formyl-tetrahydrofolate.</text>
</comment>
<comment type="catalytic activity">
    <reaction evidence="1">
        <text>N(1)-(5-phospho-beta-D-ribosyl)glycinamide + formate + ATP = N(2)-formyl-N(1)-(5-phospho-beta-D-ribosyl)glycinamide + ADP + phosphate + H(+)</text>
        <dbReference type="Rhea" id="RHEA:24829"/>
        <dbReference type="ChEBI" id="CHEBI:15378"/>
        <dbReference type="ChEBI" id="CHEBI:15740"/>
        <dbReference type="ChEBI" id="CHEBI:30616"/>
        <dbReference type="ChEBI" id="CHEBI:43474"/>
        <dbReference type="ChEBI" id="CHEBI:143788"/>
        <dbReference type="ChEBI" id="CHEBI:147286"/>
        <dbReference type="ChEBI" id="CHEBI:456216"/>
        <dbReference type="EC" id="6.3.1.21"/>
    </reaction>
    <physiologicalReaction direction="left-to-right" evidence="1">
        <dbReference type="Rhea" id="RHEA:24830"/>
    </physiologicalReaction>
</comment>
<comment type="pathway">
    <text evidence="1">Purine metabolism; IMP biosynthesis via de novo pathway; N(2)-formyl-N(1)-(5-phospho-D-ribosyl)glycinamide from N(1)-(5-phospho-D-ribosyl)glycinamide (formate route): step 1/1.</text>
</comment>
<comment type="subunit">
    <text evidence="1">Homodimer.</text>
</comment>
<comment type="subcellular location">
    <subcellularLocation>
        <location>Cell inner membrane</location>
        <topology>Peripheral membrane protein</topology>
    </subcellularLocation>
</comment>
<comment type="similarity">
    <text evidence="1">Belongs to the PurK/PurT family.</text>
</comment>
<accession>P46927</accession>
<dbReference type="EC" id="6.3.1.21" evidence="1"/>
<dbReference type="EMBL" id="S68137">
    <property type="protein sequence ID" value="AAB28915.1"/>
    <property type="molecule type" value="Genomic_DNA"/>
</dbReference>
<dbReference type="PIR" id="A56691">
    <property type="entry name" value="A56691"/>
</dbReference>
<dbReference type="SMR" id="P46927"/>
<dbReference type="STRING" id="75985.WC39_09905"/>
<dbReference type="UniPathway" id="UPA00074">
    <property type="reaction ID" value="UER00127"/>
</dbReference>
<dbReference type="GO" id="GO:0005829">
    <property type="term" value="C:cytosol"/>
    <property type="evidence" value="ECO:0007669"/>
    <property type="project" value="TreeGrafter"/>
</dbReference>
<dbReference type="GO" id="GO:0005886">
    <property type="term" value="C:plasma membrane"/>
    <property type="evidence" value="ECO:0007669"/>
    <property type="project" value="UniProtKB-SubCell"/>
</dbReference>
<dbReference type="GO" id="GO:0005524">
    <property type="term" value="F:ATP binding"/>
    <property type="evidence" value="ECO:0007669"/>
    <property type="project" value="UniProtKB-UniRule"/>
</dbReference>
<dbReference type="GO" id="GO:0000287">
    <property type="term" value="F:magnesium ion binding"/>
    <property type="evidence" value="ECO:0007669"/>
    <property type="project" value="InterPro"/>
</dbReference>
<dbReference type="GO" id="GO:0043815">
    <property type="term" value="F:phosphoribosylglycinamide formyltransferase 2 activity"/>
    <property type="evidence" value="ECO:0007669"/>
    <property type="project" value="UniProtKB-UniRule"/>
</dbReference>
<dbReference type="GO" id="GO:0004644">
    <property type="term" value="F:phosphoribosylglycinamide formyltransferase activity"/>
    <property type="evidence" value="ECO:0007669"/>
    <property type="project" value="InterPro"/>
</dbReference>
<dbReference type="GO" id="GO:0006189">
    <property type="term" value="P:'de novo' IMP biosynthetic process"/>
    <property type="evidence" value="ECO:0007669"/>
    <property type="project" value="UniProtKB-UniRule"/>
</dbReference>
<dbReference type="FunFam" id="3.30.1490.20:FF:000013">
    <property type="entry name" value="Formate-dependent phosphoribosylglycinamide formyltransferase"/>
    <property type="match status" value="1"/>
</dbReference>
<dbReference type="FunFam" id="3.40.50.20:FF:000007">
    <property type="entry name" value="Formate-dependent phosphoribosylglycinamide formyltransferase"/>
    <property type="match status" value="1"/>
</dbReference>
<dbReference type="Gene3D" id="3.40.50.20">
    <property type="match status" value="1"/>
</dbReference>
<dbReference type="Gene3D" id="3.30.1490.20">
    <property type="entry name" value="ATP-grasp fold, A domain"/>
    <property type="match status" value="1"/>
</dbReference>
<dbReference type="Gene3D" id="3.30.470.20">
    <property type="entry name" value="ATP-grasp fold, B domain"/>
    <property type="match status" value="1"/>
</dbReference>
<dbReference type="HAMAP" id="MF_01643">
    <property type="entry name" value="PurT"/>
    <property type="match status" value="1"/>
</dbReference>
<dbReference type="InterPro" id="IPR011761">
    <property type="entry name" value="ATP-grasp"/>
</dbReference>
<dbReference type="InterPro" id="IPR003135">
    <property type="entry name" value="ATP-grasp_carboxylate-amine"/>
</dbReference>
<dbReference type="InterPro" id="IPR013815">
    <property type="entry name" value="ATP_grasp_subdomain_1"/>
</dbReference>
<dbReference type="InterPro" id="IPR016185">
    <property type="entry name" value="PreATP-grasp_dom_sf"/>
</dbReference>
<dbReference type="InterPro" id="IPR005862">
    <property type="entry name" value="PurT"/>
</dbReference>
<dbReference type="InterPro" id="IPR054350">
    <property type="entry name" value="PurT/PurK_preATP-grasp"/>
</dbReference>
<dbReference type="InterPro" id="IPR048740">
    <property type="entry name" value="PurT_C"/>
</dbReference>
<dbReference type="InterPro" id="IPR011054">
    <property type="entry name" value="Rudment_hybrid_motif"/>
</dbReference>
<dbReference type="NCBIfam" id="NF006766">
    <property type="entry name" value="PRK09288.1"/>
    <property type="match status" value="1"/>
</dbReference>
<dbReference type="NCBIfam" id="TIGR01142">
    <property type="entry name" value="purT"/>
    <property type="match status" value="1"/>
</dbReference>
<dbReference type="PANTHER" id="PTHR43055">
    <property type="entry name" value="FORMATE-DEPENDENT PHOSPHORIBOSYLGLYCINAMIDE FORMYLTRANSFERASE"/>
    <property type="match status" value="1"/>
</dbReference>
<dbReference type="PANTHER" id="PTHR43055:SF1">
    <property type="entry name" value="FORMATE-DEPENDENT PHOSPHORIBOSYLGLYCINAMIDE FORMYLTRANSFERASE"/>
    <property type="match status" value="1"/>
</dbReference>
<dbReference type="Pfam" id="PF02222">
    <property type="entry name" value="ATP-grasp"/>
    <property type="match status" value="1"/>
</dbReference>
<dbReference type="Pfam" id="PF21244">
    <property type="entry name" value="PurT_C"/>
    <property type="match status" value="1"/>
</dbReference>
<dbReference type="Pfam" id="PF22660">
    <property type="entry name" value="RS_preATP-grasp-like"/>
    <property type="match status" value="1"/>
</dbReference>
<dbReference type="SUPFAM" id="SSF56059">
    <property type="entry name" value="Glutathione synthetase ATP-binding domain-like"/>
    <property type="match status" value="1"/>
</dbReference>
<dbReference type="SUPFAM" id="SSF52440">
    <property type="entry name" value="PreATP-grasp domain"/>
    <property type="match status" value="1"/>
</dbReference>
<dbReference type="SUPFAM" id="SSF51246">
    <property type="entry name" value="Rudiment single hybrid motif"/>
    <property type="match status" value="1"/>
</dbReference>
<dbReference type="PROSITE" id="PS50975">
    <property type="entry name" value="ATP_GRASP"/>
    <property type="match status" value="1"/>
</dbReference>
<keyword id="KW-0067">ATP-binding</keyword>
<keyword id="KW-0997">Cell inner membrane</keyword>
<keyword id="KW-1003">Cell membrane</keyword>
<keyword id="KW-0903">Direct protein sequencing</keyword>
<keyword id="KW-0436">Ligase</keyword>
<keyword id="KW-0460">Magnesium</keyword>
<keyword id="KW-0472">Membrane</keyword>
<keyword id="KW-0479">Metal-binding</keyword>
<keyword id="KW-0547">Nucleotide-binding</keyword>
<keyword id="KW-0658">Purine biosynthesis</keyword>